<organism>
    <name type="scientific">Priestia megaterium</name>
    <name type="common">Bacillus megaterium</name>
    <dbReference type="NCBI Taxonomy" id="1404"/>
    <lineage>
        <taxon>Bacteria</taxon>
        <taxon>Bacillati</taxon>
        <taxon>Bacillota</taxon>
        <taxon>Bacilli</taxon>
        <taxon>Bacillales</taxon>
        <taxon>Bacillaceae</taxon>
        <taxon>Priestia</taxon>
    </lineage>
</organism>
<reference key="1">
    <citation type="journal article" date="1998" name="Biochem. J.">
        <title>Cobalamin (vitamin B12) biosynthesis: identification and characterization of a Bacillus megaterium cobI operon.</title>
        <authorList>
            <person name="Raux E."/>
            <person name="Lanois A."/>
            <person name="Warren M.J."/>
            <person name="Rambach A."/>
            <person name="Thermes C."/>
        </authorList>
    </citation>
    <scope>NUCLEOTIDE SEQUENCE [GENOMIC DNA]</scope>
    <source>
        <strain>DSM 509 / CCM 1464 / NBRC 12109</strain>
    </source>
</reference>
<accession>O87698</accession>
<dbReference type="EC" id="6.3.5.11" evidence="1"/>
<dbReference type="EMBL" id="AJ000758">
    <property type="protein sequence ID" value="CAA04316.1"/>
    <property type="molecule type" value="Genomic_DNA"/>
</dbReference>
<dbReference type="PIR" id="T44692">
    <property type="entry name" value="T44692"/>
</dbReference>
<dbReference type="SMR" id="O87698"/>
<dbReference type="UniPathway" id="UPA00148">
    <property type="reaction ID" value="UER00231"/>
</dbReference>
<dbReference type="GO" id="GO:0005524">
    <property type="term" value="F:ATP binding"/>
    <property type="evidence" value="ECO:0007669"/>
    <property type="project" value="UniProtKB-UniRule"/>
</dbReference>
<dbReference type="GO" id="GO:0042242">
    <property type="term" value="F:cobyrinic acid a,c-diamide synthase activity"/>
    <property type="evidence" value="ECO:0007669"/>
    <property type="project" value="UniProtKB-UniRule"/>
</dbReference>
<dbReference type="GO" id="GO:0009236">
    <property type="term" value="P:cobalamin biosynthetic process"/>
    <property type="evidence" value="ECO:0007669"/>
    <property type="project" value="UniProtKB-UniRule"/>
</dbReference>
<dbReference type="CDD" id="cd05388">
    <property type="entry name" value="CobB_N"/>
    <property type="match status" value="1"/>
</dbReference>
<dbReference type="CDD" id="cd03130">
    <property type="entry name" value="GATase1_CobB"/>
    <property type="match status" value="1"/>
</dbReference>
<dbReference type="Gene3D" id="3.40.50.880">
    <property type="match status" value="1"/>
</dbReference>
<dbReference type="Gene3D" id="3.40.50.300">
    <property type="entry name" value="P-loop containing nucleotide triphosphate hydrolases"/>
    <property type="match status" value="2"/>
</dbReference>
<dbReference type="HAMAP" id="MF_00027">
    <property type="entry name" value="CobB_CbiA"/>
    <property type="match status" value="1"/>
</dbReference>
<dbReference type="InterPro" id="IPR004484">
    <property type="entry name" value="CbiA/CobB_synth"/>
</dbReference>
<dbReference type="InterPro" id="IPR029062">
    <property type="entry name" value="Class_I_gatase-like"/>
</dbReference>
<dbReference type="InterPro" id="IPR002586">
    <property type="entry name" value="CobQ/CobB/MinD/ParA_Nub-bd_dom"/>
</dbReference>
<dbReference type="InterPro" id="IPR011698">
    <property type="entry name" value="GATase_3"/>
</dbReference>
<dbReference type="InterPro" id="IPR027417">
    <property type="entry name" value="P-loop_NTPase"/>
</dbReference>
<dbReference type="NCBIfam" id="TIGR00379">
    <property type="entry name" value="cobB"/>
    <property type="match status" value="1"/>
</dbReference>
<dbReference type="NCBIfam" id="NF002204">
    <property type="entry name" value="PRK01077.1"/>
    <property type="match status" value="1"/>
</dbReference>
<dbReference type="PANTHER" id="PTHR43873">
    <property type="entry name" value="COBYRINATE A,C-DIAMIDE SYNTHASE"/>
    <property type="match status" value="1"/>
</dbReference>
<dbReference type="PANTHER" id="PTHR43873:SF1">
    <property type="entry name" value="COBYRINATE A,C-DIAMIDE SYNTHASE"/>
    <property type="match status" value="1"/>
</dbReference>
<dbReference type="Pfam" id="PF01656">
    <property type="entry name" value="CbiA"/>
    <property type="match status" value="1"/>
</dbReference>
<dbReference type="Pfam" id="PF07685">
    <property type="entry name" value="GATase_3"/>
    <property type="match status" value="1"/>
</dbReference>
<dbReference type="SUPFAM" id="SSF52317">
    <property type="entry name" value="Class I glutamine amidotransferase-like"/>
    <property type="match status" value="1"/>
</dbReference>
<dbReference type="SUPFAM" id="SSF52540">
    <property type="entry name" value="P-loop containing nucleoside triphosphate hydrolases"/>
    <property type="match status" value="1"/>
</dbReference>
<dbReference type="PROSITE" id="PS51274">
    <property type="entry name" value="GATASE_COBBQ"/>
    <property type="match status" value="1"/>
</dbReference>
<feature type="chain" id="PRO_0000141254" description="Cobyrinate a,c-diamide synthase">
    <location>
        <begin position="1"/>
        <end position="460"/>
    </location>
</feature>
<feature type="domain" description="GATase cobBQ-type" evidence="1">
    <location>
        <begin position="248"/>
        <end position="440"/>
    </location>
</feature>
<feature type="active site" description="Nucleophile" evidence="1">
    <location>
        <position position="331"/>
    </location>
</feature>
<feature type="site" description="Increases nucleophilicity of active site Cys" evidence="1">
    <location>
        <position position="432"/>
    </location>
</feature>
<name>CBIA_PRIMG</name>
<gene>
    <name evidence="1" type="primary">cbiA</name>
</gene>
<evidence type="ECO:0000255" key="1">
    <source>
        <dbReference type="HAMAP-Rule" id="MF_00027"/>
    </source>
</evidence>
<proteinExistence type="inferred from homology"/>
<sequence>MSNRRLVIAGTGSGVPKTTLTIGLMAALKQAGYRVQGFKCGPDYIDPTYHTAVTERTSRNIDSWMLEHDMVREIVARASQDADISIMEGVMGFFDGKNPLTNEGSTAEISLITNSPVLLVVNCASMARSAAAIVKGFQQFLPEANIVGVIANRVGSEGHYKLVKAAIEQECHIPVVGYLKTNDELTIPERHLGLIPSIERGELTPFFEQLGQLVHDTIDIEKVYELALAPKIEINDPIFTKPSVPQVKIAVARDAAFNFYYEENFELLKACGAELVEFSPLKGEMVPQDADGLYIGGGFPEEFAETLAQQIDVKNSVRAAIQKGLPTLAECGGFMFLTDGIVTTDDTCYEMVGLIPGQVRMQTKLAALGYREVTGKPGNFLFKGDIQAKGHEFHYSTFYSEKEFSPAYDTKGMRGMKEEGYMNNNLIAGYTHFHFGSSTKMVENWVEQCKAAKKERRDAV</sequence>
<keyword id="KW-0067">ATP-binding</keyword>
<keyword id="KW-0169">Cobalamin biosynthesis</keyword>
<keyword id="KW-0315">Glutamine amidotransferase</keyword>
<keyword id="KW-0436">Ligase</keyword>
<keyword id="KW-0460">Magnesium</keyword>
<keyword id="KW-0547">Nucleotide-binding</keyword>
<protein>
    <recommendedName>
        <fullName evidence="1">Cobyrinate a,c-diamide synthase</fullName>
        <ecNumber evidence="1">6.3.5.11</ecNumber>
    </recommendedName>
    <alternativeName>
        <fullName evidence="1">Cobyrinic acid a,c-diamide synthetase</fullName>
    </alternativeName>
</protein>
<comment type="function">
    <text evidence="1">Catalyzes the ATP-dependent amidation of the two carboxylate groups at positions a and c of cobyrinate, using either L-glutamine or ammonia as the nitrogen source.</text>
</comment>
<comment type="catalytic activity">
    <reaction evidence="1">
        <text>cob(II)yrinate + 2 L-glutamine + 2 ATP + 2 H2O = cob(II)yrinate a,c diamide + 2 L-glutamate + 2 ADP + 2 phosphate + 2 H(+)</text>
        <dbReference type="Rhea" id="RHEA:26289"/>
        <dbReference type="ChEBI" id="CHEBI:15377"/>
        <dbReference type="ChEBI" id="CHEBI:15378"/>
        <dbReference type="ChEBI" id="CHEBI:29985"/>
        <dbReference type="ChEBI" id="CHEBI:30616"/>
        <dbReference type="ChEBI" id="CHEBI:43474"/>
        <dbReference type="ChEBI" id="CHEBI:58359"/>
        <dbReference type="ChEBI" id="CHEBI:58537"/>
        <dbReference type="ChEBI" id="CHEBI:58894"/>
        <dbReference type="ChEBI" id="CHEBI:456216"/>
        <dbReference type="EC" id="6.3.5.11"/>
    </reaction>
</comment>
<comment type="cofactor">
    <cofactor evidence="1">
        <name>Mg(2+)</name>
        <dbReference type="ChEBI" id="CHEBI:18420"/>
    </cofactor>
</comment>
<comment type="pathway">
    <text evidence="1">Cofactor biosynthesis; adenosylcobalamin biosynthesis; cob(II)yrinate a,c-diamide from sirohydrochlorin (anaerobic route): step 10/10.</text>
</comment>
<comment type="domain">
    <text evidence="1">Comprises of two domains. The C-terminal domain contains the binding site for glutamine and catalyzes the hydrolysis of this substrate to glutamate and ammonia. The N-terminal domain is anticipated to bind ATP and cobyrinate and catalyzes the ultimate synthesis of the diamide product. The ammonia produced via the glutaminase domain is probably translocated to the adjacent domain via a molecular tunnel, where it reacts with an activated intermediate.</text>
</comment>
<comment type="miscellaneous">
    <text evidence="1">The a and c carboxylates of cobyrinate are activated for nucleophilic attack via formation of a phosphorylated intermediate by ATP. CbiA catalyzes first the amidation of the c-carboxylate, and then that of the a-carboxylate.</text>
</comment>
<comment type="similarity">
    <text evidence="1">Belongs to the CobB/CbiA family.</text>
</comment>